<proteinExistence type="inferred from homology"/>
<sequence length="129" mass="14016">MSGRGKQGGKVRAKAKSRSSRAGLQFPVGRVHRLLRKGNYAERVGAGAPVYMAAVLEYLTAEILELAGNAARDNKKTRIIPRHLQLAIRNDEELNKLLGKVTIAQGGVLPNIQAVLLPKKTESHKAKSK</sequence>
<dbReference type="EMBL" id="U38934">
    <property type="protein sequence ID" value="AAC60009.1"/>
    <property type="molecule type" value="Genomic_DNA"/>
</dbReference>
<dbReference type="RefSeq" id="NP_001025924.1">
    <property type="nucleotide sequence ID" value="NM_001030753.1"/>
</dbReference>
<dbReference type="EMDB" id="EMD-0323"/>
<dbReference type="SMR" id="P70082"/>
<dbReference type="BioGRID" id="679225">
    <property type="interactions" value="2"/>
</dbReference>
<dbReference type="FunCoup" id="P70082">
    <property type="interactions" value="1668"/>
</dbReference>
<dbReference type="STRING" id="9031.ENSGALP00000040715"/>
<dbReference type="Ensembl" id="ENSGALT00000134804">
    <property type="protein sequence ID" value="ENSGALP00000088247"/>
    <property type="gene ID" value="ENSGALG00000061455"/>
</dbReference>
<dbReference type="Ensembl" id="ENSGALT00000147857">
    <property type="protein sequence ID" value="ENSGALP00000080594"/>
    <property type="gene ID" value="ENSGALG00000061455"/>
</dbReference>
<dbReference type="Ensembl" id="ENSGALT00000148410">
    <property type="protein sequence ID" value="ENSGALP00000090819"/>
    <property type="gene ID" value="ENSGALG00000061455"/>
</dbReference>
<dbReference type="Ensembl" id="ENSGALT00010029346.1">
    <property type="protein sequence ID" value="ENSGALP00010017043.1"/>
    <property type="gene ID" value="ENSGALG00010012248.1"/>
</dbReference>
<dbReference type="Ensembl" id="ENSGALT00010029350.1">
    <property type="protein sequence ID" value="ENSGALP00010017046.1"/>
    <property type="gene ID" value="ENSGALG00010012248.1"/>
</dbReference>
<dbReference type="Ensembl" id="ENSGALT00010029362.1">
    <property type="protein sequence ID" value="ENSGALP00010017052.1"/>
    <property type="gene ID" value="ENSGALG00010012248.1"/>
</dbReference>
<dbReference type="GeneID" id="417947"/>
<dbReference type="KEGG" id="gga:417947"/>
<dbReference type="CTD" id="417947"/>
<dbReference type="VEuPathDB" id="HostDB:geneid_417947"/>
<dbReference type="GeneTree" id="ENSGT00940000153118"/>
<dbReference type="InParanoid" id="P70082"/>
<dbReference type="OMA" id="WCPKIAR"/>
<dbReference type="OrthoDB" id="9421954at2759"/>
<dbReference type="PhylomeDB" id="P70082"/>
<dbReference type="Reactome" id="R-GGA-201722">
    <property type="pathway name" value="Formation of the beta-catenin:TCF transactivating complex"/>
</dbReference>
<dbReference type="Reactome" id="R-GGA-212300">
    <property type="pathway name" value="PRC2 methylates histones and DNA"/>
</dbReference>
<dbReference type="Reactome" id="R-GGA-2299718">
    <property type="pathway name" value="Condensation of Prophase Chromosomes"/>
</dbReference>
<dbReference type="Reactome" id="R-GGA-2559580">
    <property type="pathway name" value="Oxidative Stress Induced Senescence"/>
</dbReference>
<dbReference type="Reactome" id="R-GGA-3214815">
    <property type="pathway name" value="HDACs deacetylate histones"/>
</dbReference>
<dbReference type="Reactome" id="R-GGA-3214847">
    <property type="pathway name" value="HATs acetylate histones"/>
</dbReference>
<dbReference type="Reactome" id="R-GGA-5250924">
    <property type="pathway name" value="B-WICH complex positively regulates rRNA expression"/>
</dbReference>
<dbReference type="Reactome" id="R-GGA-5578749">
    <property type="pathway name" value="Transcriptional regulation by small RNAs"/>
</dbReference>
<dbReference type="Reactome" id="R-GGA-5625886">
    <property type="pathway name" value="Activated PKN1 stimulates transcription of AR (androgen receptor) regulated genes KLK2 and KLK3"/>
</dbReference>
<dbReference type="Reactome" id="R-GGA-5689603">
    <property type="pathway name" value="UCH proteinases"/>
</dbReference>
<dbReference type="Reactome" id="R-GGA-5689880">
    <property type="pathway name" value="Ub-specific processing proteases"/>
</dbReference>
<dbReference type="Reactome" id="R-GGA-5689901">
    <property type="pathway name" value="Metalloprotease DUBs"/>
</dbReference>
<dbReference type="Reactome" id="R-GGA-606279">
    <property type="pathway name" value="Deposition of new CENPA-containing nucleosomes at the centromere"/>
</dbReference>
<dbReference type="Reactome" id="R-GGA-68616">
    <property type="pathway name" value="Assembly of the ORC complex at the origin of replication"/>
</dbReference>
<dbReference type="Reactome" id="R-GGA-73728">
    <property type="pathway name" value="RNA Polymerase I Promoter Opening"/>
</dbReference>
<dbReference type="Reactome" id="R-GGA-73772">
    <property type="pathway name" value="RNA Polymerase I Promoter Escape"/>
</dbReference>
<dbReference type="Reactome" id="R-GGA-8936459">
    <property type="pathway name" value="RUNX1 regulates genes involved in megakaryocyte differentiation and platelet function"/>
</dbReference>
<dbReference type="Reactome" id="R-GGA-9018519">
    <property type="pathway name" value="Estrogen-dependent gene expression"/>
</dbReference>
<dbReference type="Reactome" id="R-GGA-9841922">
    <property type="pathway name" value="MLL4 and MLL3 complexes regulate expression of PPARG target genes in adipogenesis and hepatic steatosis"/>
</dbReference>
<dbReference type="Reactome" id="R-GGA-9843940">
    <property type="pathway name" value="Regulation of endogenous retroelements by KRAB-ZFP proteins"/>
</dbReference>
<dbReference type="Reactome" id="R-GGA-9843970">
    <property type="pathway name" value="Regulation of endogenous retroelements by the Human Silencing Hub (HUSH) complex"/>
</dbReference>
<dbReference type="PRO" id="PR:P70082"/>
<dbReference type="Proteomes" id="UP000000539">
    <property type="component" value="Chromosome 1"/>
</dbReference>
<dbReference type="Bgee" id="ENSGALG00000049859">
    <property type="expression patterns" value="Expressed in granulocyte and 12 other cell types or tissues"/>
</dbReference>
<dbReference type="GO" id="GO:0005654">
    <property type="term" value="C:nucleoplasm"/>
    <property type="evidence" value="ECO:0000304"/>
    <property type="project" value="Reactome"/>
</dbReference>
<dbReference type="GO" id="GO:0000786">
    <property type="term" value="C:nucleosome"/>
    <property type="evidence" value="ECO:0000318"/>
    <property type="project" value="GO_Central"/>
</dbReference>
<dbReference type="GO" id="GO:0005634">
    <property type="term" value="C:nucleus"/>
    <property type="evidence" value="ECO:0000318"/>
    <property type="project" value="GO_Central"/>
</dbReference>
<dbReference type="GO" id="GO:0003677">
    <property type="term" value="F:DNA binding"/>
    <property type="evidence" value="ECO:0007669"/>
    <property type="project" value="UniProtKB-KW"/>
</dbReference>
<dbReference type="GO" id="GO:0046982">
    <property type="term" value="F:protein heterodimerization activity"/>
    <property type="evidence" value="ECO:0007669"/>
    <property type="project" value="InterPro"/>
</dbReference>
<dbReference type="GO" id="GO:0030527">
    <property type="term" value="F:structural constituent of chromatin"/>
    <property type="evidence" value="ECO:0000318"/>
    <property type="project" value="GO_Central"/>
</dbReference>
<dbReference type="GO" id="GO:0031507">
    <property type="term" value="P:heterochromatin formation"/>
    <property type="evidence" value="ECO:0000318"/>
    <property type="project" value="GO_Central"/>
</dbReference>
<dbReference type="CDD" id="cd00074">
    <property type="entry name" value="HFD_H2A"/>
    <property type="match status" value="1"/>
</dbReference>
<dbReference type="FunFam" id="1.10.20.10:FF:000004">
    <property type="entry name" value="Histone H2A"/>
    <property type="match status" value="1"/>
</dbReference>
<dbReference type="Gene3D" id="1.10.20.10">
    <property type="entry name" value="Histone, subunit A"/>
    <property type="match status" value="1"/>
</dbReference>
<dbReference type="InterPro" id="IPR009072">
    <property type="entry name" value="Histone-fold"/>
</dbReference>
<dbReference type="InterPro" id="IPR002119">
    <property type="entry name" value="Histone_H2A"/>
</dbReference>
<dbReference type="InterPro" id="IPR007125">
    <property type="entry name" value="Histone_H2A/H2B/H3"/>
</dbReference>
<dbReference type="InterPro" id="IPR032454">
    <property type="entry name" value="Histone_H2A_C"/>
</dbReference>
<dbReference type="InterPro" id="IPR032458">
    <property type="entry name" value="Histone_H2A_CS"/>
</dbReference>
<dbReference type="PANTHER" id="PTHR23430">
    <property type="entry name" value="HISTONE H2A"/>
    <property type="match status" value="1"/>
</dbReference>
<dbReference type="Pfam" id="PF00125">
    <property type="entry name" value="Histone"/>
    <property type="match status" value="1"/>
</dbReference>
<dbReference type="Pfam" id="PF16211">
    <property type="entry name" value="Histone_H2A_C"/>
    <property type="match status" value="1"/>
</dbReference>
<dbReference type="PRINTS" id="PR00620">
    <property type="entry name" value="HISTONEH2A"/>
</dbReference>
<dbReference type="SMART" id="SM00414">
    <property type="entry name" value="H2A"/>
    <property type="match status" value="1"/>
</dbReference>
<dbReference type="SUPFAM" id="SSF47113">
    <property type="entry name" value="Histone-fold"/>
    <property type="match status" value="1"/>
</dbReference>
<dbReference type="PROSITE" id="PS00046">
    <property type="entry name" value="HISTONE_H2A"/>
    <property type="match status" value="1"/>
</dbReference>
<keyword id="KW-0007">Acetylation</keyword>
<keyword id="KW-0158">Chromosome</keyword>
<keyword id="KW-0238">DNA-binding</keyword>
<keyword id="KW-1017">Isopeptide bond</keyword>
<keyword id="KW-0488">Methylation</keyword>
<keyword id="KW-0544">Nucleosome core</keyword>
<keyword id="KW-0539">Nucleus</keyword>
<keyword id="KW-0597">Phosphoprotein</keyword>
<keyword id="KW-1185">Reference proteome</keyword>
<keyword id="KW-0832">Ubl conjugation</keyword>
<accession>P70082</accession>
<feature type="initiator methionine" description="Removed" evidence="1">
    <location>
        <position position="1"/>
    </location>
</feature>
<feature type="chain" id="PRO_0000344251" description="Histone H2A.J">
    <location>
        <begin position="2"/>
        <end position="129"/>
    </location>
</feature>
<feature type="region of interest" description="Disordered" evidence="3">
    <location>
        <begin position="1"/>
        <end position="22"/>
    </location>
</feature>
<feature type="compositionally biased region" description="Basic residues" evidence="3">
    <location>
        <begin position="7"/>
        <end position="19"/>
    </location>
</feature>
<feature type="modified residue" description="N-acetylserine" evidence="1">
    <location>
        <position position="2"/>
    </location>
</feature>
<feature type="modified residue" description="Phosphoserine" evidence="1">
    <location>
        <position position="2"/>
    </location>
</feature>
<feature type="modified residue" description="N6-acetyllysine" evidence="1">
    <location>
        <position position="6"/>
    </location>
</feature>
<feature type="modified residue" description="N6-lactoyllysine; alternate" evidence="2">
    <location>
        <position position="10"/>
    </location>
</feature>
<feature type="modified residue" description="N5-methylglutamine" evidence="1">
    <location>
        <position position="105"/>
    </location>
</feature>
<feature type="cross-link" description="Glycyl lysine isopeptide (Lys-Gly) (interchain with G-Cter in ubiquitin)" evidence="1">
    <location>
        <position position="14"/>
    </location>
</feature>
<feature type="cross-link" description="Glycyl lysine isopeptide (Lys-Gly) (interchain with G-Cter in ubiquitin)" evidence="1">
    <location>
        <position position="16"/>
    </location>
</feature>
<feature type="cross-link" description="Glycyl lysine isopeptide (Lys-Gly) (interchain with G-Cter in ubiquitin)" evidence="1">
    <location>
        <position position="120"/>
    </location>
</feature>
<organism>
    <name type="scientific">Gallus gallus</name>
    <name type="common">Chicken</name>
    <dbReference type="NCBI Taxonomy" id="9031"/>
    <lineage>
        <taxon>Eukaryota</taxon>
        <taxon>Metazoa</taxon>
        <taxon>Chordata</taxon>
        <taxon>Craniata</taxon>
        <taxon>Vertebrata</taxon>
        <taxon>Euteleostomi</taxon>
        <taxon>Archelosauria</taxon>
        <taxon>Archosauria</taxon>
        <taxon>Dinosauria</taxon>
        <taxon>Saurischia</taxon>
        <taxon>Theropoda</taxon>
        <taxon>Coelurosauria</taxon>
        <taxon>Aves</taxon>
        <taxon>Neognathae</taxon>
        <taxon>Galloanserae</taxon>
        <taxon>Galliformes</taxon>
        <taxon>Phasianidae</taxon>
        <taxon>Phasianinae</taxon>
        <taxon>Gallus</taxon>
    </lineage>
</organism>
<gene>
    <name type="primary">H2A-IX</name>
</gene>
<evidence type="ECO:0000250" key="1"/>
<evidence type="ECO:0000250" key="2">
    <source>
        <dbReference type="UniProtKB" id="P0C0S5"/>
    </source>
</evidence>
<evidence type="ECO:0000256" key="3">
    <source>
        <dbReference type="SAM" id="MobiDB-lite"/>
    </source>
</evidence>
<evidence type="ECO:0000305" key="4"/>
<reference key="1">
    <citation type="journal article" date="1996" name="DNA Res.">
        <title>Organization of the chicken histone genes in a major gene cluster and generation of an almost complete set of the core histone protein sequences.</title>
        <authorList>
            <person name="Takami Y."/>
            <person name="Higashio M."/>
            <person name="Fukuoka T."/>
            <person name="Takechi S."/>
            <person name="Nakayama T."/>
        </authorList>
    </citation>
    <scope>NUCLEOTIDE SEQUENCE [GENOMIC DNA]</scope>
</reference>
<comment type="function">
    <text>Core component of nucleosome. Nucleosomes wrap and compact DNA into chromatin, limiting DNA accessibility to the cellular machineries which require DNA as a template. Histones thereby play a central role in transcription regulation, DNA repair, DNA replication and chromosomal stability. DNA accessibility is regulated via a complex set of post-translational modifications of histones, also called histone code, and nucleosome remodeling.</text>
</comment>
<comment type="subunit">
    <text>The nucleosome is a histone octamer containing two molecules each of H2A, H2B, H3 and H4 assembled in one H3-H4 heterotetramer and two H2A-H2B heterodimers. The octamer wraps approximately 147 bp of DNA.</text>
</comment>
<comment type="subcellular location">
    <subcellularLocation>
        <location evidence="1">Nucleus</location>
    </subcellularLocation>
    <subcellularLocation>
        <location evidence="1">Chromosome</location>
    </subcellularLocation>
</comment>
<comment type="PTM">
    <text evidence="1">Monoubiquitination of Lys-120 (H2AXK119ub) gives a specific tag for epigenetic transcriptional repression. Following DNA double-strand breaks (DSBs), it is ubiquitinated through 'Lys-63' linkage of ubiquitin moieties (By similarity).</text>
</comment>
<comment type="PTM">
    <text evidence="1">Phosphorylation on Ser-2 is enhanced during mitosis. Phosphorylation on Ser-2 directly represses transcription (By similarity).</text>
</comment>
<comment type="similarity">
    <text evidence="4">Belongs to the histone H2A family.</text>
</comment>
<protein>
    <recommendedName>
        <fullName>Histone H2A.J</fullName>
        <shortName>H2a/j</shortName>
    </recommendedName>
    <alternativeName>
        <fullName>Histone H2A-IX</fullName>
    </alternativeName>
</protein>
<name>H2AJ_CHICK</name>